<feature type="chain" id="PRO_1000133365" description="Probable anaerobic glycerol-3-phosphate dehydrogenase subunit B">
    <location>
        <begin position="1"/>
        <end position="427"/>
    </location>
</feature>
<name>GLPB_HALS3</name>
<comment type="catalytic activity">
    <reaction evidence="1">
        <text>a quinone + sn-glycerol 3-phosphate = dihydroxyacetone phosphate + a quinol</text>
        <dbReference type="Rhea" id="RHEA:18977"/>
        <dbReference type="ChEBI" id="CHEBI:24646"/>
        <dbReference type="ChEBI" id="CHEBI:57597"/>
        <dbReference type="ChEBI" id="CHEBI:57642"/>
        <dbReference type="ChEBI" id="CHEBI:132124"/>
        <dbReference type="EC" id="1.1.5.3"/>
    </reaction>
</comment>
<comment type="cofactor">
    <cofactor evidence="1">
        <name>FMN</name>
        <dbReference type="ChEBI" id="CHEBI:58210"/>
    </cofactor>
</comment>
<comment type="pathway">
    <text evidence="1">Polyol metabolism; glycerol degradation via glycerol kinase pathway; glycerone phosphate from sn-glycerol 3-phosphate (anaerobic route): step 1/1.</text>
</comment>
<comment type="similarity">
    <text evidence="1">Belongs to the anaerobic G-3-P dehydrogenase subunit B family.</text>
</comment>
<protein>
    <recommendedName>
        <fullName evidence="1">Probable anaerobic glycerol-3-phosphate dehydrogenase subunit B</fullName>
        <shortName evidence="1">Anaerobic G-3-P dehydrogenase subunit B</shortName>
        <shortName evidence="1">Anaerobic G3Pdhase B</shortName>
        <ecNumber evidence="1">1.1.5.3</ecNumber>
    </recommendedName>
</protein>
<keyword id="KW-0285">Flavoprotein</keyword>
<keyword id="KW-0288">FMN</keyword>
<keyword id="KW-0560">Oxidoreductase</keyword>
<gene>
    <name evidence="1" type="primary">glpB</name>
    <name type="ordered locus">OE_3764F</name>
</gene>
<accession>B0R6S4</accession>
<reference key="1">
    <citation type="journal article" date="2008" name="Genomics">
        <title>Evolution in the laboratory: the genome of Halobacterium salinarum strain R1 compared to that of strain NRC-1.</title>
        <authorList>
            <person name="Pfeiffer F."/>
            <person name="Schuster S.C."/>
            <person name="Broicher A."/>
            <person name="Falb M."/>
            <person name="Palm P."/>
            <person name="Rodewald K."/>
            <person name="Ruepp A."/>
            <person name="Soppa J."/>
            <person name="Tittor J."/>
            <person name="Oesterhelt D."/>
        </authorList>
    </citation>
    <scope>NUCLEOTIDE SEQUENCE [LARGE SCALE GENOMIC DNA]</scope>
    <source>
        <strain>ATCC 29341 / DSM 671 / R1</strain>
    </source>
</reference>
<evidence type="ECO:0000255" key="1">
    <source>
        <dbReference type="HAMAP-Rule" id="MF_00753"/>
    </source>
</evidence>
<dbReference type="EC" id="1.1.5.3" evidence="1"/>
<dbReference type="EMBL" id="AM774415">
    <property type="protein sequence ID" value="CAP14443.1"/>
    <property type="molecule type" value="Genomic_DNA"/>
</dbReference>
<dbReference type="RefSeq" id="WP_010903448.1">
    <property type="nucleotide sequence ID" value="NC_010364.1"/>
</dbReference>
<dbReference type="EnsemblBacteria" id="CAP14443">
    <property type="protein sequence ID" value="CAP14443"/>
    <property type="gene ID" value="OE_3764F"/>
</dbReference>
<dbReference type="GeneID" id="68694571"/>
<dbReference type="KEGG" id="hsl:OE_3764F"/>
<dbReference type="HOGENOM" id="CLU_047793_1_0_2"/>
<dbReference type="UniPathway" id="UPA00618">
    <property type="reaction ID" value="UER00673"/>
</dbReference>
<dbReference type="Proteomes" id="UP000001321">
    <property type="component" value="Chromosome"/>
</dbReference>
<dbReference type="GO" id="GO:0009331">
    <property type="term" value="C:glycerol-3-phosphate dehydrogenase (FAD) complex"/>
    <property type="evidence" value="ECO:0007669"/>
    <property type="project" value="InterPro"/>
</dbReference>
<dbReference type="GO" id="GO:0004368">
    <property type="term" value="F:glycerol-3-phosphate dehydrogenase (quinone) activity"/>
    <property type="evidence" value="ECO:0007669"/>
    <property type="project" value="UniProtKB-UniRule"/>
</dbReference>
<dbReference type="GO" id="GO:0019563">
    <property type="term" value="P:glycerol catabolic process"/>
    <property type="evidence" value="ECO:0007669"/>
    <property type="project" value="UniProtKB-UniPathway"/>
</dbReference>
<dbReference type="Gene3D" id="3.50.50.60">
    <property type="entry name" value="FAD/NAD(P)-binding domain"/>
    <property type="match status" value="1"/>
</dbReference>
<dbReference type="HAMAP" id="MF_00753">
    <property type="entry name" value="Glycerol3P_GlpB"/>
    <property type="match status" value="1"/>
</dbReference>
<dbReference type="InterPro" id="IPR003953">
    <property type="entry name" value="FAD-dep_OxRdtase_2_FAD-bd"/>
</dbReference>
<dbReference type="InterPro" id="IPR050315">
    <property type="entry name" value="FAD-oxidoreductase_2"/>
</dbReference>
<dbReference type="InterPro" id="IPR036188">
    <property type="entry name" value="FAD/NAD-bd_sf"/>
</dbReference>
<dbReference type="InterPro" id="IPR009158">
    <property type="entry name" value="G3P_DH_GlpB_su"/>
</dbReference>
<dbReference type="NCBIfam" id="TIGR03378">
    <property type="entry name" value="glycerol3P_GlpB"/>
    <property type="match status" value="1"/>
</dbReference>
<dbReference type="NCBIfam" id="NF003722">
    <property type="entry name" value="PRK05329.1-5"/>
    <property type="match status" value="1"/>
</dbReference>
<dbReference type="PANTHER" id="PTHR43400:SF11">
    <property type="entry name" value="ANAEROBIC GLYCEROL-3-PHOSPHATE DEHYDROGENASE SUBUNIT B"/>
    <property type="match status" value="1"/>
</dbReference>
<dbReference type="PANTHER" id="PTHR43400">
    <property type="entry name" value="FUMARATE REDUCTASE"/>
    <property type="match status" value="1"/>
</dbReference>
<dbReference type="Pfam" id="PF00890">
    <property type="entry name" value="FAD_binding_2"/>
    <property type="match status" value="1"/>
</dbReference>
<dbReference type="PIRSF" id="PIRSF000141">
    <property type="entry name" value="Anaerobic_G3P_dh"/>
    <property type="match status" value="1"/>
</dbReference>
<dbReference type="PRINTS" id="PR00411">
    <property type="entry name" value="PNDRDTASEI"/>
</dbReference>
<dbReference type="SUPFAM" id="SSF51905">
    <property type="entry name" value="FAD/NAD(P)-binding domain"/>
    <property type="match status" value="1"/>
</dbReference>
<proteinExistence type="inferred from homology"/>
<organism>
    <name type="scientific">Halobacterium salinarum (strain ATCC 29341 / DSM 671 / R1)</name>
    <dbReference type="NCBI Taxonomy" id="478009"/>
    <lineage>
        <taxon>Archaea</taxon>
        <taxon>Methanobacteriati</taxon>
        <taxon>Methanobacteriota</taxon>
        <taxon>Stenosarchaea group</taxon>
        <taxon>Halobacteria</taxon>
        <taxon>Halobacteriales</taxon>
        <taxon>Halobacteriaceae</taxon>
        <taxon>Halobacterium</taxon>
        <taxon>Halobacterium salinarum NRC-34001</taxon>
    </lineage>
</organism>
<sequence length="427" mass="43945">MAIESEVLVIGGGLAGITSALAAADAGADTRLVSYKQSTLRNASGLVDVLGYTPSGDGPVVDPFDAIPSLPDAHPYRTVGVDTVRDAMAFFDAHAPRYQGHHTDANALVPTHGGTVKPTARYPASAAAGLASDDRDTLLVGFETLPDFNADHAAAHLESAGVPFDVRGVTVPFPGDLRAGAKVTRYAGLLDANPQVSVDGTERPLRLALATRVADAAADADRVGFPAVLGDDDPAGVRDALADHLGAAVFEVPMGPPSLPGLRLSDHLFGALEAAGVRIETGNPVVDADTTAGGVETVYVEKNGARIPNSADEYVLATGGLVGKGIDSDRDAVYEPIFDCRIAHSDDRYAWFDDDAFGDHAFAQFGVRTDDTLRPRDDDGAAAHANLRAAGAVLGGYNFAAEHSGSGVSIATGYAAGTAAAEAIHDE</sequence>